<organism>
    <name type="scientific">Chloroflexus aurantiacus (strain ATCC 29364 / DSM 637 / Y-400-fl)</name>
    <dbReference type="NCBI Taxonomy" id="480224"/>
    <lineage>
        <taxon>Bacteria</taxon>
        <taxon>Bacillati</taxon>
        <taxon>Chloroflexota</taxon>
        <taxon>Chloroflexia</taxon>
        <taxon>Chloroflexales</taxon>
        <taxon>Chloroflexineae</taxon>
        <taxon>Chloroflexaceae</taxon>
        <taxon>Chloroflexus</taxon>
    </lineage>
</organism>
<gene>
    <name evidence="1" type="primary">nuoB2</name>
    <name type="ordered locus">Chy400_3135</name>
</gene>
<evidence type="ECO:0000255" key="1">
    <source>
        <dbReference type="HAMAP-Rule" id="MF_01356"/>
    </source>
</evidence>
<sequence>MGIEEKAGNLGIVTTTLETVVNWGRTNAMWPLLFGLACCAIEMMGAQASNYDLSRFGMELNRASPRQADLMIVAGRVSRKMAPVVRRLYDQMPEPKWVIAMGDCAACGGIFNNYAIVQGVDEVVPVDVYVAGCPPRPEALIDGIMMLHQKVMREKISGKKESPIRIDQPLVQVK</sequence>
<dbReference type="EC" id="7.1.1.-" evidence="1"/>
<dbReference type="EMBL" id="CP001364">
    <property type="protein sequence ID" value="ACM54514.1"/>
    <property type="molecule type" value="Genomic_DNA"/>
</dbReference>
<dbReference type="SMR" id="B9LAU1"/>
<dbReference type="KEGG" id="chl:Chy400_3135"/>
<dbReference type="HOGENOM" id="CLU_055737_7_3_0"/>
<dbReference type="OrthoDB" id="9786737at2"/>
<dbReference type="GO" id="GO:0005886">
    <property type="term" value="C:plasma membrane"/>
    <property type="evidence" value="ECO:0007669"/>
    <property type="project" value="UniProtKB-SubCell"/>
</dbReference>
<dbReference type="GO" id="GO:0045271">
    <property type="term" value="C:respiratory chain complex I"/>
    <property type="evidence" value="ECO:0007669"/>
    <property type="project" value="TreeGrafter"/>
</dbReference>
<dbReference type="GO" id="GO:0051539">
    <property type="term" value="F:4 iron, 4 sulfur cluster binding"/>
    <property type="evidence" value="ECO:0007669"/>
    <property type="project" value="UniProtKB-KW"/>
</dbReference>
<dbReference type="GO" id="GO:0005506">
    <property type="term" value="F:iron ion binding"/>
    <property type="evidence" value="ECO:0007669"/>
    <property type="project" value="UniProtKB-UniRule"/>
</dbReference>
<dbReference type="GO" id="GO:0008137">
    <property type="term" value="F:NADH dehydrogenase (ubiquinone) activity"/>
    <property type="evidence" value="ECO:0007669"/>
    <property type="project" value="InterPro"/>
</dbReference>
<dbReference type="GO" id="GO:0050136">
    <property type="term" value="F:NADH:ubiquinone reductase (non-electrogenic) activity"/>
    <property type="evidence" value="ECO:0007669"/>
    <property type="project" value="UniProtKB-UniRule"/>
</dbReference>
<dbReference type="GO" id="GO:0048038">
    <property type="term" value="F:quinone binding"/>
    <property type="evidence" value="ECO:0007669"/>
    <property type="project" value="UniProtKB-KW"/>
</dbReference>
<dbReference type="GO" id="GO:0009060">
    <property type="term" value="P:aerobic respiration"/>
    <property type="evidence" value="ECO:0007669"/>
    <property type="project" value="TreeGrafter"/>
</dbReference>
<dbReference type="GO" id="GO:0015990">
    <property type="term" value="P:electron transport coupled proton transport"/>
    <property type="evidence" value="ECO:0007669"/>
    <property type="project" value="TreeGrafter"/>
</dbReference>
<dbReference type="FunFam" id="3.40.50.12280:FF:000004">
    <property type="entry name" value="NADH-quinone oxidoreductase subunit B"/>
    <property type="match status" value="1"/>
</dbReference>
<dbReference type="Gene3D" id="3.40.50.12280">
    <property type="match status" value="1"/>
</dbReference>
<dbReference type="HAMAP" id="MF_01356">
    <property type="entry name" value="NDH1_NuoB"/>
    <property type="match status" value="1"/>
</dbReference>
<dbReference type="InterPro" id="IPR006137">
    <property type="entry name" value="NADH_UbQ_OxRdtase-like_20kDa"/>
</dbReference>
<dbReference type="InterPro" id="IPR006138">
    <property type="entry name" value="NADH_UQ_OxRdtase_20Kd_su"/>
</dbReference>
<dbReference type="NCBIfam" id="TIGR01957">
    <property type="entry name" value="nuoB_fam"/>
    <property type="match status" value="1"/>
</dbReference>
<dbReference type="NCBIfam" id="NF005012">
    <property type="entry name" value="PRK06411.1"/>
    <property type="match status" value="1"/>
</dbReference>
<dbReference type="PANTHER" id="PTHR11995">
    <property type="entry name" value="NADH DEHYDROGENASE"/>
    <property type="match status" value="1"/>
</dbReference>
<dbReference type="PANTHER" id="PTHR11995:SF14">
    <property type="entry name" value="NADH DEHYDROGENASE [UBIQUINONE] IRON-SULFUR PROTEIN 7, MITOCHONDRIAL"/>
    <property type="match status" value="1"/>
</dbReference>
<dbReference type="Pfam" id="PF01058">
    <property type="entry name" value="Oxidored_q6"/>
    <property type="match status" value="1"/>
</dbReference>
<dbReference type="SUPFAM" id="SSF56770">
    <property type="entry name" value="HydA/Nqo6-like"/>
    <property type="match status" value="1"/>
</dbReference>
<protein>
    <recommendedName>
        <fullName evidence="1">NADH-quinone oxidoreductase subunit B 2</fullName>
        <ecNumber evidence="1">7.1.1.-</ecNumber>
    </recommendedName>
    <alternativeName>
        <fullName evidence="1">NADH dehydrogenase I subunit B 2</fullName>
    </alternativeName>
    <alternativeName>
        <fullName evidence="1">NDH-1 subunit B 2</fullName>
    </alternativeName>
</protein>
<accession>B9LAU1</accession>
<feature type="chain" id="PRO_0000376176" description="NADH-quinone oxidoreductase subunit B 2">
    <location>
        <begin position="1"/>
        <end position="174"/>
    </location>
</feature>
<feature type="binding site" evidence="1">
    <location>
        <position position="38"/>
    </location>
    <ligand>
        <name>[4Fe-4S] cluster</name>
        <dbReference type="ChEBI" id="CHEBI:49883"/>
    </ligand>
</feature>
<feature type="binding site" evidence="1">
    <location>
        <position position="39"/>
    </location>
    <ligand>
        <name>[4Fe-4S] cluster</name>
        <dbReference type="ChEBI" id="CHEBI:49883"/>
    </ligand>
</feature>
<feature type="binding site" evidence="1">
    <location>
        <position position="104"/>
    </location>
    <ligand>
        <name>[4Fe-4S] cluster</name>
        <dbReference type="ChEBI" id="CHEBI:49883"/>
    </ligand>
</feature>
<feature type="binding site" evidence="1">
    <location>
        <position position="133"/>
    </location>
    <ligand>
        <name>[4Fe-4S] cluster</name>
        <dbReference type="ChEBI" id="CHEBI:49883"/>
    </ligand>
</feature>
<comment type="function">
    <text evidence="1">NDH-1 shuttles electrons from NADH, via FMN and iron-sulfur (Fe-S) centers, to quinones in the respiratory chain. The immediate electron acceptor for the enzyme in this species is believed to be ubiquinone. Couples the redox reaction to proton translocation (for every two electrons transferred, four hydrogen ions are translocated across the cytoplasmic membrane), and thus conserves the redox energy in a proton gradient.</text>
</comment>
<comment type="catalytic activity">
    <reaction evidence="1">
        <text>a quinone + NADH + 5 H(+)(in) = a quinol + NAD(+) + 4 H(+)(out)</text>
        <dbReference type="Rhea" id="RHEA:57888"/>
        <dbReference type="ChEBI" id="CHEBI:15378"/>
        <dbReference type="ChEBI" id="CHEBI:24646"/>
        <dbReference type="ChEBI" id="CHEBI:57540"/>
        <dbReference type="ChEBI" id="CHEBI:57945"/>
        <dbReference type="ChEBI" id="CHEBI:132124"/>
    </reaction>
</comment>
<comment type="cofactor">
    <cofactor evidence="1">
        <name>[4Fe-4S] cluster</name>
        <dbReference type="ChEBI" id="CHEBI:49883"/>
    </cofactor>
    <text evidence="1">Binds 1 [4Fe-4S] cluster.</text>
</comment>
<comment type="subunit">
    <text evidence="1">NDH-1 is composed of 14 different subunits. Subunits NuoB, C, D, E, F, and G constitute the peripheral sector of the complex.</text>
</comment>
<comment type="subcellular location">
    <subcellularLocation>
        <location evidence="1">Cell membrane</location>
        <topology evidence="1">Peripheral membrane protein</topology>
        <orientation evidence="1">Cytoplasmic side</orientation>
    </subcellularLocation>
</comment>
<comment type="similarity">
    <text evidence="1">Belongs to the complex I 20 kDa subunit family.</text>
</comment>
<name>NUOB2_CHLSY</name>
<proteinExistence type="inferred from homology"/>
<reference key="1">
    <citation type="submission" date="2009-01" db="EMBL/GenBank/DDBJ databases">
        <title>Complete sequence of Chloroflexus sp. Y-400-fl.</title>
        <authorList>
            <consortium name="US DOE Joint Genome Institute"/>
            <person name="Lucas S."/>
            <person name="Copeland A."/>
            <person name="Lapidus A."/>
            <person name="Glavina del Rio T."/>
            <person name="Dalin E."/>
            <person name="Tice H."/>
            <person name="Bruce D."/>
            <person name="Goodwin L."/>
            <person name="Pitluck S."/>
            <person name="Sims D."/>
            <person name="Kiss H."/>
            <person name="Brettin T."/>
            <person name="Detter J.C."/>
            <person name="Han C."/>
            <person name="Larimer F."/>
            <person name="Land M."/>
            <person name="Hauser L."/>
            <person name="Kyrpides N."/>
            <person name="Ovchinnikova G."/>
            <person name="Bryant D.A."/>
            <person name="Richardson P."/>
        </authorList>
    </citation>
    <scope>NUCLEOTIDE SEQUENCE [LARGE SCALE GENOMIC DNA]</scope>
    <source>
        <strain>ATCC 29364 / DSM 637 / Y-400-fl</strain>
    </source>
</reference>
<keyword id="KW-0004">4Fe-4S</keyword>
<keyword id="KW-1003">Cell membrane</keyword>
<keyword id="KW-0408">Iron</keyword>
<keyword id="KW-0411">Iron-sulfur</keyword>
<keyword id="KW-0472">Membrane</keyword>
<keyword id="KW-0479">Metal-binding</keyword>
<keyword id="KW-0520">NAD</keyword>
<keyword id="KW-0874">Quinone</keyword>
<keyword id="KW-1278">Translocase</keyword>
<keyword id="KW-0813">Transport</keyword>
<keyword id="KW-0830">Ubiquinone</keyword>